<dbReference type="EC" id="3.1.-.-" evidence="1"/>
<dbReference type="EMBL" id="CU928145">
    <property type="protein sequence ID" value="CAU98443.1"/>
    <property type="molecule type" value="Genomic_DNA"/>
</dbReference>
<dbReference type="RefSeq" id="WP_000730807.1">
    <property type="nucleotide sequence ID" value="NC_011748.1"/>
</dbReference>
<dbReference type="SMR" id="B7LBI5"/>
<dbReference type="KEGG" id="eck:EC55989_2575"/>
<dbReference type="HOGENOM" id="CLU_055978_4_0_6"/>
<dbReference type="Proteomes" id="UP000000746">
    <property type="component" value="Chromosome"/>
</dbReference>
<dbReference type="GO" id="GO:0004521">
    <property type="term" value="F:RNA endonuclease activity"/>
    <property type="evidence" value="ECO:0007669"/>
    <property type="project" value="UniProtKB-UniRule"/>
</dbReference>
<dbReference type="GO" id="GO:0019843">
    <property type="term" value="F:rRNA binding"/>
    <property type="evidence" value="ECO:0007669"/>
    <property type="project" value="UniProtKB-UniRule"/>
</dbReference>
<dbReference type="GO" id="GO:0072344">
    <property type="term" value="P:rescue of stalled ribosome"/>
    <property type="evidence" value="ECO:0007669"/>
    <property type="project" value="UniProtKB-UniRule"/>
</dbReference>
<dbReference type="Gene3D" id="3.30.1370.110">
    <property type="match status" value="1"/>
</dbReference>
<dbReference type="HAMAP" id="MF_01042">
    <property type="entry name" value="SmrB"/>
    <property type="match status" value="1"/>
</dbReference>
<dbReference type="InterPro" id="IPR002625">
    <property type="entry name" value="Smr_dom"/>
</dbReference>
<dbReference type="InterPro" id="IPR036063">
    <property type="entry name" value="Smr_dom_sf"/>
</dbReference>
<dbReference type="InterPro" id="IPR022990">
    <property type="entry name" value="SmrB-like"/>
</dbReference>
<dbReference type="NCBIfam" id="NF003432">
    <property type="entry name" value="PRK04946.1"/>
    <property type="match status" value="1"/>
</dbReference>
<dbReference type="PANTHER" id="PTHR35562">
    <property type="entry name" value="DNA ENDONUCLEASE SMRA-RELATED"/>
    <property type="match status" value="1"/>
</dbReference>
<dbReference type="PANTHER" id="PTHR35562:SF1">
    <property type="entry name" value="UPF0115 PROTEIN YFCN"/>
    <property type="match status" value="1"/>
</dbReference>
<dbReference type="Pfam" id="PF01713">
    <property type="entry name" value="Smr"/>
    <property type="match status" value="1"/>
</dbReference>
<dbReference type="SMART" id="SM00463">
    <property type="entry name" value="SMR"/>
    <property type="match status" value="1"/>
</dbReference>
<dbReference type="SUPFAM" id="SSF160443">
    <property type="entry name" value="SMR domain-like"/>
    <property type="match status" value="1"/>
</dbReference>
<dbReference type="PROSITE" id="PS50828">
    <property type="entry name" value="SMR"/>
    <property type="match status" value="1"/>
</dbReference>
<sequence length="183" mass="21017">MKKKTTLSEEDQALFRQLMAGTRKIKQDTIVHRPQRKKISEVPVKRLIQEQADASHYFSDEFQPLLNTEGPVKYVRPDVSHFEAKKLRRGDYSPELFLDLHGLTQLQAKQELGALIAACRREHVFCACVMHGHGKHILKQQTPLWLAQHPHVMAFHQAPKEYGGDAALLVLIEVEEWLPPELT</sequence>
<evidence type="ECO:0000255" key="1">
    <source>
        <dbReference type="HAMAP-Rule" id="MF_01042"/>
    </source>
</evidence>
<gene>
    <name evidence="1" type="primary">smrB</name>
    <name type="ordered locus">EC55989_2575</name>
</gene>
<comment type="function">
    <text evidence="1">Acts as a ribosome collision sensor. Detects stalled/collided disomes (pairs of ribosomes where the leading ribosome is stalled and a second ribosome has collided with it) and endonucleolytically cleaves mRNA at the 5' boundary of the stalled ribosome. Stalled/collided disomes form a new interface (primarily via the 30S subunits) that binds SmrB. Cleaved mRNA becomes available for tmRNA ligation, leading to ribosomal subunit dissociation and rescue of stalled ribosomes.</text>
</comment>
<comment type="subunit">
    <text evidence="1">Associates with collided ribosomes, but not with correctly translating polysomes.</text>
</comment>
<comment type="similarity">
    <text evidence="1">Belongs to the SmrB family.</text>
</comment>
<accession>B7LBI5</accession>
<reference key="1">
    <citation type="journal article" date="2009" name="PLoS Genet.">
        <title>Organised genome dynamics in the Escherichia coli species results in highly diverse adaptive paths.</title>
        <authorList>
            <person name="Touchon M."/>
            <person name="Hoede C."/>
            <person name="Tenaillon O."/>
            <person name="Barbe V."/>
            <person name="Baeriswyl S."/>
            <person name="Bidet P."/>
            <person name="Bingen E."/>
            <person name="Bonacorsi S."/>
            <person name="Bouchier C."/>
            <person name="Bouvet O."/>
            <person name="Calteau A."/>
            <person name="Chiapello H."/>
            <person name="Clermont O."/>
            <person name="Cruveiller S."/>
            <person name="Danchin A."/>
            <person name="Diard M."/>
            <person name="Dossat C."/>
            <person name="Karoui M.E."/>
            <person name="Frapy E."/>
            <person name="Garry L."/>
            <person name="Ghigo J.M."/>
            <person name="Gilles A.M."/>
            <person name="Johnson J."/>
            <person name="Le Bouguenec C."/>
            <person name="Lescat M."/>
            <person name="Mangenot S."/>
            <person name="Martinez-Jehanne V."/>
            <person name="Matic I."/>
            <person name="Nassif X."/>
            <person name="Oztas S."/>
            <person name="Petit M.A."/>
            <person name="Pichon C."/>
            <person name="Rouy Z."/>
            <person name="Ruf C.S."/>
            <person name="Schneider D."/>
            <person name="Tourret J."/>
            <person name="Vacherie B."/>
            <person name="Vallenet D."/>
            <person name="Medigue C."/>
            <person name="Rocha E.P.C."/>
            <person name="Denamur E."/>
        </authorList>
    </citation>
    <scope>NUCLEOTIDE SEQUENCE [LARGE SCALE GENOMIC DNA]</scope>
    <source>
        <strain>55989 / EAEC</strain>
    </source>
</reference>
<name>SMRB_ECO55</name>
<organism>
    <name type="scientific">Escherichia coli (strain 55989 / EAEC)</name>
    <dbReference type="NCBI Taxonomy" id="585055"/>
    <lineage>
        <taxon>Bacteria</taxon>
        <taxon>Pseudomonadati</taxon>
        <taxon>Pseudomonadota</taxon>
        <taxon>Gammaproteobacteria</taxon>
        <taxon>Enterobacterales</taxon>
        <taxon>Enterobacteriaceae</taxon>
        <taxon>Escherichia</taxon>
    </lineage>
</organism>
<protein>
    <recommendedName>
        <fullName evidence="1">Ribosome rescue factor SmrB</fullName>
        <ecNumber evidence="1">3.1.-.-</ecNumber>
    </recommendedName>
</protein>
<proteinExistence type="inferred from homology"/>
<keyword id="KW-0255">Endonuclease</keyword>
<keyword id="KW-0378">Hydrolase</keyword>
<keyword id="KW-0540">Nuclease</keyword>
<keyword id="KW-1185">Reference proteome</keyword>
<keyword id="KW-0694">RNA-binding</keyword>
<keyword id="KW-0699">rRNA-binding</keyword>
<feature type="chain" id="PRO_1000149555" description="Ribosome rescue factor SmrB">
    <location>
        <begin position="1"/>
        <end position="183"/>
    </location>
</feature>
<feature type="domain" description="Smr" evidence="1">
    <location>
        <begin position="98"/>
        <end position="173"/>
    </location>
</feature>